<name>Y2408_MYCS2</name>
<accession>A0QV10</accession>
<accession>I7FB97</accession>
<dbReference type="EC" id="1.1.1.-" evidence="1"/>
<dbReference type="EMBL" id="CP000480">
    <property type="protein sequence ID" value="ABK73906.1"/>
    <property type="molecule type" value="Genomic_DNA"/>
</dbReference>
<dbReference type="EMBL" id="CP001663">
    <property type="protein sequence ID" value="AFP38815.1"/>
    <property type="status" value="ALT_INIT"/>
    <property type="molecule type" value="Genomic_DNA"/>
</dbReference>
<dbReference type="RefSeq" id="WP_003893773.1">
    <property type="nucleotide sequence ID" value="NZ_SIJM01000012.1"/>
</dbReference>
<dbReference type="RefSeq" id="YP_886748.1">
    <property type="nucleotide sequence ID" value="NC_008596.1"/>
</dbReference>
<dbReference type="SMR" id="A0QV10"/>
<dbReference type="STRING" id="246196.MSMEG_2408"/>
<dbReference type="PaxDb" id="246196-MSMEI_2347"/>
<dbReference type="KEGG" id="msb:LJ00_11975"/>
<dbReference type="KEGG" id="msg:MSMEI_2347"/>
<dbReference type="KEGG" id="msm:MSMEG_2408"/>
<dbReference type="PATRIC" id="fig|246196.19.peg.2373"/>
<dbReference type="eggNOG" id="COG0656">
    <property type="taxonomic scope" value="Bacteria"/>
</dbReference>
<dbReference type="OrthoDB" id="9804790at2"/>
<dbReference type="Proteomes" id="UP000000757">
    <property type="component" value="Chromosome"/>
</dbReference>
<dbReference type="Proteomes" id="UP000006158">
    <property type="component" value="Chromosome"/>
</dbReference>
<dbReference type="GO" id="GO:0004033">
    <property type="term" value="F:aldo-keto reductase (NADPH) activity"/>
    <property type="evidence" value="ECO:0007669"/>
    <property type="project" value="TreeGrafter"/>
</dbReference>
<dbReference type="FunFam" id="3.20.20.100:FF:000015">
    <property type="entry name" value="Oxidoreductase, aldo/keto reductase family"/>
    <property type="match status" value="1"/>
</dbReference>
<dbReference type="Gene3D" id="3.20.20.100">
    <property type="entry name" value="NADP-dependent oxidoreductase domain"/>
    <property type="match status" value="1"/>
</dbReference>
<dbReference type="InterPro" id="IPR020471">
    <property type="entry name" value="AKR"/>
</dbReference>
<dbReference type="InterPro" id="IPR018170">
    <property type="entry name" value="Aldo/ket_reductase_CS"/>
</dbReference>
<dbReference type="InterPro" id="IPR023210">
    <property type="entry name" value="NADP_OxRdtase_dom"/>
</dbReference>
<dbReference type="InterPro" id="IPR036812">
    <property type="entry name" value="NADP_OxRdtase_dom_sf"/>
</dbReference>
<dbReference type="PANTHER" id="PTHR43827">
    <property type="entry name" value="2,5-DIKETO-D-GLUCONIC ACID REDUCTASE"/>
    <property type="match status" value="1"/>
</dbReference>
<dbReference type="PANTHER" id="PTHR43827:SF3">
    <property type="entry name" value="NADP-DEPENDENT OXIDOREDUCTASE DOMAIN-CONTAINING PROTEIN"/>
    <property type="match status" value="1"/>
</dbReference>
<dbReference type="Pfam" id="PF00248">
    <property type="entry name" value="Aldo_ket_red"/>
    <property type="match status" value="1"/>
</dbReference>
<dbReference type="PIRSF" id="PIRSF000097">
    <property type="entry name" value="AKR"/>
    <property type="match status" value="1"/>
</dbReference>
<dbReference type="PRINTS" id="PR00069">
    <property type="entry name" value="ALDKETRDTASE"/>
</dbReference>
<dbReference type="SUPFAM" id="SSF51430">
    <property type="entry name" value="NAD(P)-linked oxidoreductase"/>
    <property type="match status" value="1"/>
</dbReference>
<dbReference type="PROSITE" id="PS00062">
    <property type="entry name" value="ALDOKETO_REDUCTASE_2"/>
    <property type="match status" value="1"/>
</dbReference>
<dbReference type="PROSITE" id="PS00063">
    <property type="entry name" value="ALDOKETO_REDUCTASE_3"/>
    <property type="match status" value="1"/>
</dbReference>
<organism>
    <name type="scientific">Mycolicibacterium smegmatis (strain ATCC 700084 / mc(2)155)</name>
    <name type="common">Mycobacterium smegmatis</name>
    <dbReference type="NCBI Taxonomy" id="246196"/>
    <lineage>
        <taxon>Bacteria</taxon>
        <taxon>Bacillati</taxon>
        <taxon>Actinomycetota</taxon>
        <taxon>Actinomycetes</taxon>
        <taxon>Mycobacteriales</taxon>
        <taxon>Mycobacteriaceae</taxon>
        <taxon>Mycolicibacterium</taxon>
    </lineage>
</organism>
<protein>
    <recommendedName>
        <fullName evidence="1">Aldo-keto reductase MSMEG_2408/MSMEI_2347</fullName>
        <ecNumber evidence="1">1.1.1.-</ecNumber>
    </recommendedName>
</protein>
<gene>
    <name type="ordered locus">MSMEG_2408</name>
    <name type="ordered locus">MSMEI_2347</name>
</gene>
<proteinExistence type="evidence at protein level"/>
<keyword id="KW-1017">Isopeptide bond</keyword>
<keyword id="KW-0521">NADP</keyword>
<keyword id="KW-0560">Oxidoreductase</keyword>
<keyword id="KW-1185">Reference proteome</keyword>
<keyword id="KW-0832">Ubl conjugation</keyword>
<sequence>MSPRITLNDGNSIPQVGLGVWQTPAEDTERAVAAALQAGYRHIDTAAAYRNETETGRAIANSGVPREDIFLVTKLWNSDQGYDATLAAFDASVQRLGVDYLDLYLIHWPVPENNKFVDTFKAFAHLRDQGRIRSIGVSNFEPEHLTTLIEETGIVPAVNQIELHPLLPQQELRDVHAKLGIATEAWSPLGQGSLLADPVITGIAEQHGKTPAQVLIRWHIQLGNIVIPKSVNPERIASNFDVFDFELSGQDITSIASLETGKRLGPDPRTFNFTG</sequence>
<reference key="1">
    <citation type="submission" date="2006-10" db="EMBL/GenBank/DDBJ databases">
        <authorList>
            <person name="Fleischmann R.D."/>
            <person name="Dodson R.J."/>
            <person name="Haft D.H."/>
            <person name="Merkel J.S."/>
            <person name="Nelson W.C."/>
            <person name="Fraser C.M."/>
        </authorList>
    </citation>
    <scope>NUCLEOTIDE SEQUENCE [LARGE SCALE GENOMIC DNA]</scope>
    <source>
        <strain>ATCC 700084 / mc(2)155</strain>
    </source>
</reference>
<reference key="2">
    <citation type="journal article" date="2007" name="Genome Biol.">
        <title>Interrupted coding sequences in Mycobacterium smegmatis: authentic mutations or sequencing errors?</title>
        <authorList>
            <person name="Deshayes C."/>
            <person name="Perrodou E."/>
            <person name="Gallien S."/>
            <person name="Euphrasie D."/>
            <person name="Schaeffer C."/>
            <person name="Van-Dorsselaer A."/>
            <person name="Poch O."/>
            <person name="Lecompte O."/>
            <person name="Reyrat J.-M."/>
        </authorList>
    </citation>
    <scope>NUCLEOTIDE SEQUENCE [LARGE SCALE GENOMIC DNA]</scope>
    <source>
        <strain>ATCC 700084 / mc(2)155</strain>
    </source>
</reference>
<reference key="3">
    <citation type="journal article" date="2009" name="Genome Res.">
        <title>Ortho-proteogenomics: multiple proteomes investigation through orthology and a new MS-based protocol.</title>
        <authorList>
            <person name="Gallien S."/>
            <person name="Perrodou E."/>
            <person name="Carapito C."/>
            <person name="Deshayes C."/>
            <person name="Reyrat J.-M."/>
            <person name="Van Dorsselaer A."/>
            <person name="Poch O."/>
            <person name="Schaeffer C."/>
            <person name="Lecompte O."/>
        </authorList>
    </citation>
    <scope>NUCLEOTIDE SEQUENCE [LARGE SCALE GENOMIC DNA]</scope>
    <source>
        <strain>ATCC 700084 / mc(2)155</strain>
    </source>
</reference>
<reference key="4">
    <citation type="journal article" date="2010" name="Mol. Biosyst.">
        <title>Expansion of the mycobacterial 'PUPylome'.</title>
        <authorList>
            <person name="Watrous J."/>
            <person name="Burns K."/>
            <person name="Liu W.T."/>
            <person name="Patel A."/>
            <person name="Hook V."/>
            <person name="Bafna V."/>
            <person name="Barry C.E. III"/>
            <person name="Bark S."/>
            <person name="Dorrestein P.C."/>
        </authorList>
    </citation>
    <scope>PUPYLATION AT LYS-262</scope>
    <scope>IDENTIFICATION BY MASS SPECTROMETRY</scope>
</reference>
<evidence type="ECO:0000250" key="1">
    <source>
        <dbReference type="UniProtKB" id="A0QV09"/>
    </source>
</evidence>
<evidence type="ECO:0000250" key="2">
    <source>
        <dbReference type="UniProtKB" id="P80874"/>
    </source>
</evidence>
<evidence type="ECO:0000269" key="3">
    <source>
    </source>
</evidence>
<evidence type="ECO:0000305" key="4"/>
<comment type="similarity">
    <text evidence="4">Belongs to the aldo/keto reductase family.</text>
</comment>
<comment type="sequence caution" evidence="4">
    <conflict type="erroneous initiation">
        <sequence resource="EMBL-CDS" id="AFP38815"/>
    </conflict>
    <text>Extended N-terminus.</text>
</comment>
<feature type="chain" id="PRO_0000380741" description="Aldo-keto reductase MSMEG_2408/MSMEI_2347">
    <location>
        <begin position="1"/>
        <end position="275"/>
    </location>
</feature>
<feature type="active site" description="Proton donor" evidence="2">
    <location>
        <position position="49"/>
    </location>
</feature>
<feature type="binding site" evidence="1">
    <location>
        <position position="189"/>
    </location>
    <ligand>
        <name>NADPH</name>
        <dbReference type="ChEBI" id="CHEBI:57783"/>
    </ligand>
</feature>
<feature type="binding site" evidence="1">
    <location>
        <position position="227"/>
    </location>
    <ligand>
        <name>NADPH</name>
        <dbReference type="ChEBI" id="CHEBI:57783"/>
    </ligand>
</feature>
<feature type="binding site" evidence="1">
    <location>
        <position position="229"/>
    </location>
    <ligand>
        <name>NADPH</name>
        <dbReference type="ChEBI" id="CHEBI:57783"/>
    </ligand>
</feature>
<feature type="binding site" evidence="1">
    <location>
        <position position="230"/>
    </location>
    <ligand>
        <name>NADPH</name>
        <dbReference type="ChEBI" id="CHEBI:57783"/>
    </ligand>
</feature>
<feature type="binding site" evidence="1">
    <location>
        <position position="231"/>
    </location>
    <ligand>
        <name>NADPH</name>
        <dbReference type="ChEBI" id="CHEBI:57783"/>
    </ligand>
</feature>
<feature type="binding site" evidence="1">
    <location>
        <position position="235"/>
    </location>
    <ligand>
        <name>NADPH</name>
        <dbReference type="ChEBI" id="CHEBI:57783"/>
    </ligand>
</feature>
<feature type="binding site" evidence="1">
    <location>
        <position position="238"/>
    </location>
    <ligand>
        <name>NADPH</name>
        <dbReference type="ChEBI" id="CHEBI:57783"/>
    </ligand>
</feature>
<feature type="binding site" evidence="1">
    <location>
        <position position="239"/>
    </location>
    <ligand>
        <name>NADPH</name>
        <dbReference type="ChEBI" id="CHEBI:57783"/>
    </ligand>
</feature>
<feature type="cross-link" description="Isoglutamyl lysine isopeptide (Lys-Gln) (interchain with Q-Cter in protein Pup)" evidence="3">
    <location>
        <position position="262"/>
    </location>
</feature>